<comment type="function">
    <text evidence="1">NDH-1 shuttles electrons from NADH, via FMN and iron-sulfur (Fe-S) centers, to quinones in the respiratory chain. The immediate electron acceptor for the enzyme in this species is believed to be ubiquinone. Couples the redox reaction to proton translocation (for every two electrons transferred, four hydrogen ions are translocated across the cytoplasmic membrane), and thus conserves the redox energy in a proton gradient.</text>
</comment>
<comment type="catalytic activity">
    <reaction evidence="1">
        <text>a quinone + NADH + 5 H(+)(in) = a quinol + NAD(+) + 4 H(+)(out)</text>
        <dbReference type="Rhea" id="RHEA:57888"/>
        <dbReference type="ChEBI" id="CHEBI:15378"/>
        <dbReference type="ChEBI" id="CHEBI:24646"/>
        <dbReference type="ChEBI" id="CHEBI:57540"/>
        <dbReference type="ChEBI" id="CHEBI:57945"/>
        <dbReference type="ChEBI" id="CHEBI:132124"/>
    </reaction>
</comment>
<comment type="subunit">
    <text evidence="1">NDH-1 is composed of 13 different subunits. Subunits NuoB, CD, E, F, and G constitute the peripheral sector of the complex.</text>
</comment>
<comment type="subcellular location">
    <subcellularLocation>
        <location evidence="1">Cell inner membrane</location>
        <topology evidence="1">Peripheral membrane protein</topology>
        <orientation evidence="1">Cytoplasmic side</orientation>
    </subcellularLocation>
</comment>
<comment type="similarity">
    <text evidence="1">In the N-terminal section; belongs to the complex I 30 kDa subunit family.</text>
</comment>
<comment type="similarity">
    <text evidence="1">In the C-terminal section; belongs to the complex I 49 kDa subunit family.</text>
</comment>
<evidence type="ECO:0000255" key="1">
    <source>
        <dbReference type="HAMAP-Rule" id="MF_01359"/>
    </source>
</evidence>
<proteinExistence type="inferred from homology"/>
<keyword id="KW-0997">Cell inner membrane</keyword>
<keyword id="KW-1003">Cell membrane</keyword>
<keyword id="KW-0472">Membrane</keyword>
<keyword id="KW-0511">Multifunctional enzyme</keyword>
<keyword id="KW-0520">NAD</keyword>
<keyword id="KW-0874">Quinone</keyword>
<keyword id="KW-1278">Translocase</keyword>
<keyword id="KW-0813">Transport</keyword>
<keyword id="KW-0830">Ubiquinone</keyword>
<accession>B3Q6T3</accession>
<reference key="1">
    <citation type="submission" date="2008-05" db="EMBL/GenBank/DDBJ databases">
        <title>Complete sequence of Rhodopseudomonas palustris TIE-1.</title>
        <authorList>
            <consortium name="US DOE Joint Genome Institute"/>
            <person name="Lucas S."/>
            <person name="Copeland A."/>
            <person name="Lapidus A."/>
            <person name="Glavina del Rio T."/>
            <person name="Dalin E."/>
            <person name="Tice H."/>
            <person name="Pitluck S."/>
            <person name="Chain P."/>
            <person name="Malfatti S."/>
            <person name="Shin M."/>
            <person name="Vergez L."/>
            <person name="Lang D."/>
            <person name="Schmutz J."/>
            <person name="Larimer F."/>
            <person name="Land M."/>
            <person name="Hauser L."/>
            <person name="Kyrpides N."/>
            <person name="Mikhailova N."/>
            <person name="Emerson D."/>
            <person name="Newman D.K."/>
            <person name="Roden E."/>
            <person name="Richardson P."/>
        </authorList>
    </citation>
    <scope>NUCLEOTIDE SEQUENCE [LARGE SCALE GENOMIC DNA]</scope>
    <source>
        <strain>TIE-1</strain>
    </source>
</reference>
<dbReference type="EC" id="7.1.1.-" evidence="1"/>
<dbReference type="EMBL" id="CP001096">
    <property type="protein sequence ID" value="ACF03232.1"/>
    <property type="molecule type" value="Genomic_DNA"/>
</dbReference>
<dbReference type="RefSeq" id="WP_012497489.1">
    <property type="nucleotide sequence ID" value="NC_011004.1"/>
</dbReference>
<dbReference type="SMR" id="B3Q6T3"/>
<dbReference type="KEGG" id="rpt:Rpal_4741"/>
<dbReference type="HOGENOM" id="CLU_015134_3_2_5"/>
<dbReference type="OrthoDB" id="9801496at2"/>
<dbReference type="Proteomes" id="UP000001725">
    <property type="component" value="Chromosome"/>
</dbReference>
<dbReference type="GO" id="GO:0030964">
    <property type="term" value="C:NADH dehydrogenase complex"/>
    <property type="evidence" value="ECO:0007669"/>
    <property type="project" value="InterPro"/>
</dbReference>
<dbReference type="GO" id="GO:0005886">
    <property type="term" value="C:plasma membrane"/>
    <property type="evidence" value="ECO:0007669"/>
    <property type="project" value="UniProtKB-SubCell"/>
</dbReference>
<dbReference type="GO" id="GO:0051287">
    <property type="term" value="F:NAD binding"/>
    <property type="evidence" value="ECO:0007669"/>
    <property type="project" value="InterPro"/>
</dbReference>
<dbReference type="GO" id="GO:0008137">
    <property type="term" value="F:NADH dehydrogenase (ubiquinone) activity"/>
    <property type="evidence" value="ECO:0007669"/>
    <property type="project" value="InterPro"/>
</dbReference>
<dbReference type="GO" id="GO:0050136">
    <property type="term" value="F:NADH:ubiquinone reductase (non-electrogenic) activity"/>
    <property type="evidence" value="ECO:0007669"/>
    <property type="project" value="UniProtKB-UniRule"/>
</dbReference>
<dbReference type="GO" id="GO:0048038">
    <property type="term" value="F:quinone binding"/>
    <property type="evidence" value="ECO:0007669"/>
    <property type="project" value="UniProtKB-KW"/>
</dbReference>
<dbReference type="Gene3D" id="1.10.645.10">
    <property type="entry name" value="Cytochrome-c3 Hydrogenase, chain B"/>
    <property type="match status" value="1"/>
</dbReference>
<dbReference type="Gene3D" id="3.30.460.80">
    <property type="entry name" value="NADH:ubiquinone oxidoreductase, 30kDa subunit"/>
    <property type="match status" value="1"/>
</dbReference>
<dbReference type="HAMAP" id="MF_01359">
    <property type="entry name" value="NDH1_NuoCD_1"/>
    <property type="match status" value="1"/>
</dbReference>
<dbReference type="HAMAP" id="MF_01358">
    <property type="entry name" value="NDH1_NuoD"/>
    <property type="match status" value="1"/>
</dbReference>
<dbReference type="InterPro" id="IPR023062">
    <property type="entry name" value="NADH_DH_suCD"/>
</dbReference>
<dbReference type="InterPro" id="IPR001135">
    <property type="entry name" value="NADH_Q_OxRdtase_suD"/>
</dbReference>
<dbReference type="InterPro" id="IPR037232">
    <property type="entry name" value="NADH_quin_OxRdtase_su_C/D-like"/>
</dbReference>
<dbReference type="InterPro" id="IPR001268">
    <property type="entry name" value="NADH_UbQ_OxRdtase_30kDa_su"/>
</dbReference>
<dbReference type="InterPro" id="IPR014029">
    <property type="entry name" value="NADH_UbQ_OxRdtase_49kDa_CS"/>
</dbReference>
<dbReference type="InterPro" id="IPR022885">
    <property type="entry name" value="NDH1_su_D/H"/>
</dbReference>
<dbReference type="InterPro" id="IPR029014">
    <property type="entry name" value="NiFe-Hase_large"/>
</dbReference>
<dbReference type="NCBIfam" id="TIGR01962">
    <property type="entry name" value="NuoD"/>
    <property type="match status" value="1"/>
</dbReference>
<dbReference type="NCBIfam" id="NF004739">
    <property type="entry name" value="PRK06075.1"/>
    <property type="match status" value="1"/>
</dbReference>
<dbReference type="NCBIfam" id="NF008728">
    <property type="entry name" value="PRK11742.1"/>
    <property type="match status" value="1"/>
</dbReference>
<dbReference type="PANTHER" id="PTHR11993:SF45">
    <property type="entry name" value="NADH-QUINONE OXIDOREDUCTASE SUBUNIT C_D"/>
    <property type="match status" value="1"/>
</dbReference>
<dbReference type="PANTHER" id="PTHR11993">
    <property type="entry name" value="NADH-UBIQUINONE OXIDOREDUCTASE 49 KDA SUBUNIT"/>
    <property type="match status" value="1"/>
</dbReference>
<dbReference type="Pfam" id="PF00329">
    <property type="entry name" value="Complex1_30kDa"/>
    <property type="match status" value="1"/>
</dbReference>
<dbReference type="Pfam" id="PF00346">
    <property type="entry name" value="Complex1_49kDa"/>
    <property type="match status" value="1"/>
</dbReference>
<dbReference type="SUPFAM" id="SSF56762">
    <property type="entry name" value="HydB/Nqo4-like"/>
    <property type="match status" value="1"/>
</dbReference>
<dbReference type="SUPFAM" id="SSF143243">
    <property type="entry name" value="Nqo5-like"/>
    <property type="match status" value="1"/>
</dbReference>
<dbReference type="PROSITE" id="PS00535">
    <property type="entry name" value="COMPLEX1_49K"/>
    <property type="match status" value="1"/>
</dbReference>
<sequence>MSASELVTELSTRFKDAVLSEQMTADRFPTVWIRPDATIDVHRFLRQEIDRPFRMLVDLWAIDETARKHRDGLPPSGITIASHLMSHERNADIRIKIALDAEYPRAKSIGSVFPNAPWYEREAYDMFGVEFEAQPHSLRILLPPGWEGHPMRKTQPGRATERPLFNMTASLFDAKEHALAADPEKFGLPTHRDGVELMILNYGPHSMATHGVFRIVLALDGEEIVAARPDIGFHHRGAEKMAERQTWHNFLPYTDRVDYLGGVMGEMPYLQAVEKACGIKVPDRALTVRIMLSEMFRIMNHLLFYGTMAQDTGAMSPVFYMFTDRERGYRVIESITGARMHPGFFRIGGLSMDLPHGWDRLVREFLDWMPSRLDDYEGMVLRNEIFRARTKGIAAYDTAMALDWGVTGPGLRATGYAWDVRKARPYAGFENFDFEIPVGHAGDCYDRTVVRVEEIRQSLKIIRQCVDNMPSGPIKADHPLTTPPPRERMLHDIETMIHHFVSTSWGPVLPPGEYTGQVETVRGLTQFALISDGEPSSYRTRIRTPSFAHLQMISAVAPGMMVADLVAYLGSIDYVMSDVDR</sequence>
<gene>
    <name evidence="1" type="primary">nuoC</name>
    <name evidence="1" type="synonym">nuoCD</name>
    <name evidence="1" type="synonym">nuoD</name>
    <name type="ordered locus">Rpal_4741</name>
</gene>
<name>NUOCD_RHOPT</name>
<protein>
    <recommendedName>
        <fullName evidence="1">NADH-quinone oxidoreductase subunit C/D</fullName>
        <ecNumber evidence="1">7.1.1.-</ecNumber>
    </recommendedName>
    <alternativeName>
        <fullName evidence="1">NADH dehydrogenase I subunit C/D</fullName>
    </alternativeName>
    <alternativeName>
        <fullName evidence="1">NDH-1 subunit C/D</fullName>
    </alternativeName>
</protein>
<organism>
    <name type="scientific">Rhodopseudomonas palustris (strain TIE-1)</name>
    <dbReference type="NCBI Taxonomy" id="395960"/>
    <lineage>
        <taxon>Bacteria</taxon>
        <taxon>Pseudomonadati</taxon>
        <taxon>Pseudomonadota</taxon>
        <taxon>Alphaproteobacteria</taxon>
        <taxon>Hyphomicrobiales</taxon>
        <taxon>Nitrobacteraceae</taxon>
        <taxon>Rhodopseudomonas</taxon>
    </lineage>
</organism>
<feature type="chain" id="PRO_0000358679" description="NADH-quinone oxidoreductase subunit C/D">
    <location>
        <begin position="1"/>
        <end position="581"/>
    </location>
</feature>
<feature type="region of interest" description="NADH dehydrogenase I subunit C" evidence="1">
    <location>
        <begin position="1"/>
        <end position="172"/>
    </location>
</feature>
<feature type="region of interest" description="NADH dehydrogenase I subunit D" evidence="1">
    <location>
        <begin position="196"/>
        <end position="581"/>
    </location>
</feature>